<comment type="function">
    <text evidence="1">Protein-L-histidine N-tele-methyltransferase that specifically monomethylates RPL3, thereby regulating translation elongation. Histidine methylation of RPL3 regulates translation elongation by slowing ribosome traversal on tyrosine codons: slower elongation provides enough time for proper folding of synthesized proteins and prevents cellular aggregation of tyrosine-rich proteins.</text>
</comment>
<comment type="catalytic activity">
    <reaction evidence="1">
        <text>L-histidyl-[protein] + S-adenosyl-L-methionine = N(tele)-methyl-L-histidyl-[protein] + S-adenosyl-L-homocysteine + H(+)</text>
        <dbReference type="Rhea" id="RHEA:19369"/>
        <dbReference type="Rhea" id="RHEA-COMP:9745"/>
        <dbReference type="Rhea" id="RHEA-COMP:11600"/>
        <dbReference type="ChEBI" id="CHEBI:15378"/>
        <dbReference type="ChEBI" id="CHEBI:16367"/>
        <dbReference type="ChEBI" id="CHEBI:29979"/>
        <dbReference type="ChEBI" id="CHEBI:57856"/>
        <dbReference type="ChEBI" id="CHEBI:59789"/>
        <dbReference type="EC" id="2.1.1.85"/>
    </reaction>
    <physiologicalReaction direction="left-to-right" evidence="1">
        <dbReference type="Rhea" id="RHEA:19370"/>
    </physiologicalReaction>
</comment>
<comment type="subunit">
    <text evidence="1">Interacts with GRWD1 and members of the heat shock protein 90 and 70 families; these proteins may possibly be methylation substrates for the enzyme.</text>
</comment>
<comment type="subcellular location">
    <subcellularLocation>
        <location evidence="1">Cytoplasm</location>
        <location evidence="1">Cytosol</location>
    </subcellularLocation>
    <subcellularLocation>
        <location evidence="1">Nucleus</location>
    </subcellularLocation>
    <subcellularLocation>
        <location evidence="1">Nucleus</location>
        <location evidence="1">Nucleolus</location>
    </subcellularLocation>
</comment>
<comment type="PTM">
    <text evidence="1">Monomethylated at His-144 through automethylation. Automethylation at His-144 positively regulates the methyltransferase activity toward RPL3. Probably methylated on other residues.</text>
</comment>
<comment type="similarity">
    <text evidence="3">Belongs to the methyltransferase superfamily. METTL18 family.</text>
</comment>
<protein>
    <recommendedName>
        <fullName evidence="3">Histidine protein methyltransferase 1 homolog</fullName>
        <ecNumber evidence="1">2.1.1.85</ecNumber>
    </recommendedName>
    <alternativeName>
        <fullName evidence="4">Methyltransferase-like protein 18</fullName>
    </alternativeName>
</protein>
<reference key="1">
    <citation type="journal article" date="2005" name="Science">
        <title>The transcriptional landscape of the mammalian genome.</title>
        <authorList>
            <person name="Carninci P."/>
            <person name="Kasukawa T."/>
            <person name="Katayama S."/>
            <person name="Gough J."/>
            <person name="Frith M.C."/>
            <person name="Maeda N."/>
            <person name="Oyama R."/>
            <person name="Ravasi T."/>
            <person name="Lenhard B."/>
            <person name="Wells C."/>
            <person name="Kodzius R."/>
            <person name="Shimokawa K."/>
            <person name="Bajic V.B."/>
            <person name="Brenner S.E."/>
            <person name="Batalov S."/>
            <person name="Forrest A.R."/>
            <person name="Zavolan M."/>
            <person name="Davis M.J."/>
            <person name="Wilming L.G."/>
            <person name="Aidinis V."/>
            <person name="Allen J.E."/>
            <person name="Ambesi-Impiombato A."/>
            <person name="Apweiler R."/>
            <person name="Aturaliya R.N."/>
            <person name="Bailey T.L."/>
            <person name="Bansal M."/>
            <person name="Baxter L."/>
            <person name="Beisel K.W."/>
            <person name="Bersano T."/>
            <person name="Bono H."/>
            <person name="Chalk A.M."/>
            <person name="Chiu K.P."/>
            <person name="Choudhary V."/>
            <person name="Christoffels A."/>
            <person name="Clutterbuck D.R."/>
            <person name="Crowe M.L."/>
            <person name="Dalla E."/>
            <person name="Dalrymple B.P."/>
            <person name="de Bono B."/>
            <person name="Della Gatta G."/>
            <person name="di Bernardo D."/>
            <person name="Down T."/>
            <person name="Engstrom P."/>
            <person name="Fagiolini M."/>
            <person name="Faulkner G."/>
            <person name="Fletcher C.F."/>
            <person name="Fukushima T."/>
            <person name="Furuno M."/>
            <person name="Futaki S."/>
            <person name="Gariboldi M."/>
            <person name="Georgii-Hemming P."/>
            <person name="Gingeras T.R."/>
            <person name="Gojobori T."/>
            <person name="Green R.E."/>
            <person name="Gustincich S."/>
            <person name="Harbers M."/>
            <person name="Hayashi Y."/>
            <person name="Hensch T.K."/>
            <person name="Hirokawa N."/>
            <person name="Hill D."/>
            <person name="Huminiecki L."/>
            <person name="Iacono M."/>
            <person name="Ikeo K."/>
            <person name="Iwama A."/>
            <person name="Ishikawa T."/>
            <person name="Jakt M."/>
            <person name="Kanapin A."/>
            <person name="Katoh M."/>
            <person name="Kawasawa Y."/>
            <person name="Kelso J."/>
            <person name="Kitamura H."/>
            <person name="Kitano H."/>
            <person name="Kollias G."/>
            <person name="Krishnan S.P."/>
            <person name="Kruger A."/>
            <person name="Kummerfeld S.K."/>
            <person name="Kurochkin I.V."/>
            <person name="Lareau L.F."/>
            <person name="Lazarevic D."/>
            <person name="Lipovich L."/>
            <person name="Liu J."/>
            <person name="Liuni S."/>
            <person name="McWilliam S."/>
            <person name="Madan Babu M."/>
            <person name="Madera M."/>
            <person name="Marchionni L."/>
            <person name="Matsuda H."/>
            <person name="Matsuzawa S."/>
            <person name="Miki H."/>
            <person name="Mignone F."/>
            <person name="Miyake S."/>
            <person name="Morris K."/>
            <person name="Mottagui-Tabar S."/>
            <person name="Mulder N."/>
            <person name="Nakano N."/>
            <person name="Nakauchi H."/>
            <person name="Ng P."/>
            <person name="Nilsson R."/>
            <person name="Nishiguchi S."/>
            <person name="Nishikawa S."/>
            <person name="Nori F."/>
            <person name="Ohara O."/>
            <person name="Okazaki Y."/>
            <person name="Orlando V."/>
            <person name="Pang K.C."/>
            <person name="Pavan W.J."/>
            <person name="Pavesi G."/>
            <person name="Pesole G."/>
            <person name="Petrovsky N."/>
            <person name="Piazza S."/>
            <person name="Reed J."/>
            <person name="Reid J.F."/>
            <person name="Ring B.Z."/>
            <person name="Ringwald M."/>
            <person name="Rost B."/>
            <person name="Ruan Y."/>
            <person name="Salzberg S.L."/>
            <person name="Sandelin A."/>
            <person name="Schneider C."/>
            <person name="Schoenbach C."/>
            <person name="Sekiguchi K."/>
            <person name="Semple C.A."/>
            <person name="Seno S."/>
            <person name="Sessa L."/>
            <person name="Sheng Y."/>
            <person name="Shibata Y."/>
            <person name="Shimada H."/>
            <person name="Shimada K."/>
            <person name="Silva D."/>
            <person name="Sinclair B."/>
            <person name="Sperling S."/>
            <person name="Stupka E."/>
            <person name="Sugiura K."/>
            <person name="Sultana R."/>
            <person name="Takenaka Y."/>
            <person name="Taki K."/>
            <person name="Tammoja K."/>
            <person name="Tan S.L."/>
            <person name="Tang S."/>
            <person name="Taylor M.S."/>
            <person name="Tegner J."/>
            <person name="Teichmann S.A."/>
            <person name="Ueda H.R."/>
            <person name="van Nimwegen E."/>
            <person name="Verardo R."/>
            <person name="Wei C.L."/>
            <person name="Yagi K."/>
            <person name="Yamanishi H."/>
            <person name="Zabarovsky E."/>
            <person name="Zhu S."/>
            <person name="Zimmer A."/>
            <person name="Hide W."/>
            <person name="Bult C."/>
            <person name="Grimmond S.M."/>
            <person name="Teasdale R.D."/>
            <person name="Liu E.T."/>
            <person name="Brusic V."/>
            <person name="Quackenbush J."/>
            <person name="Wahlestedt C."/>
            <person name="Mattick J.S."/>
            <person name="Hume D.A."/>
            <person name="Kai C."/>
            <person name="Sasaki D."/>
            <person name="Tomaru Y."/>
            <person name="Fukuda S."/>
            <person name="Kanamori-Katayama M."/>
            <person name="Suzuki M."/>
            <person name="Aoki J."/>
            <person name="Arakawa T."/>
            <person name="Iida J."/>
            <person name="Imamura K."/>
            <person name="Itoh M."/>
            <person name="Kato T."/>
            <person name="Kawaji H."/>
            <person name="Kawagashira N."/>
            <person name="Kawashima T."/>
            <person name="Kojima M."/>
            <person name="Kondo S."/>
            <person name="Konno H."/>
            <person name="Nakano K."/>
            <person name="Ninomiya N."/>
            <person name="Nishio T."/>
            <person name="Okada M."/>
            <person name="Plessy C."/>
            <person name="Shibata K."/>
            <person name="Shiraki T."/>
            <person name="Suzuki S."/>
            <person name="Tagami M."/>
            <person name="Waki K."/>
            <person name="Watahiki A."/>
            <person name="Okamura-Oho Y."/>
            <person name="Suzuki H."/>
            <person name="Kawai J."/>
            <person name="Hayashizaki Y."/>
        </authorList>
    </citation>
    <scope>NUCLEOTIDE SEQUENCE [LARGE SCALE MRNA]</scope>
    <source>
        <strain>C57BL/6J</strain>
        <tissue>Egg</tissue>
        <tissue>Embryo</tissue>
    </source>
</reference>
<reference key="2">
    <citation type="journal article" date="2004" name="Genome Res.">
        <title>The status, quality, and expansion of the NIH full-length cDNA project: the Mammalian Gene Collection (MGC).</title>
        <authorList>
            <consortium name="The MGC Project Team"/>
        </authorList>
    </citation>
    <scope>NUCLEOTIDE SEQUENCE [LARGE SCALE MRNA]</scope>
    <source>
        <strain>C57BL/6J</strain>
        <tissue>Brain</tissue>
        <tissue>Embryo</tissue>
    </source>
</reference>
<gene>
    <name evidence="4" type="primary">Mettl18</name>
</gene>
<keyword id="KW-0963">Cytoplasm</keyword>
<keyword id="KW-0488">Methylation</keyword>
<keyword id="KW-0489">Methyltransferase</keyword>
<keyword id="KW-0539">Nucleus</keyword>
<keyword id="KW-0597">Phosphoprotein</keyword>
<keyword id="KW-1185">Reference proteome</keyword>
<keyword id="KW-0949">S-adenosyl-L-methionine</keyword>
<keyword id="KW-0808">Transferase</keyword>
<accession>Q9CZ09</accession>
<accession>Q810I8</accession>
<name>MET18_MOUSE</name>
<sequence length="362" mass="40448">MAFQFNFSIEEDLENKLTSLDDGTCVLESQKGKQDKRQSTERPGLPRDHSWKCSSLGNAASSEDTGSPPPIADRSDDPEACKHQPSWKPAKEHVMPKDVNHVLENTVLEMLPGPQHANTAVVKTVSLKEKFPGENIVSKSFSSHSDLIPGVYEGGLKIWECTFDLLTYFTKAKVKFAGQKVLDLGCGSGLLGITASKGGAREVHFQDYNGLVIDEVTLPNVVANVPLQDDSNGKNEPDGKRQRKSEVGREICKCRLFSGEWAEFCKLVLREKLFVKYDLILTSETIYNPDYYSTLHETFLRLLSRSGRVLLASKAHYFGVGGGVHLFQKFVEEKGVFETRTLEVIDEGLKRFLMEMTFKHPS</sequence>
<evidence type="ECO:0000250" key="1">
    <source>
        <dbReference type="UniProtKB" id="O95568"/>
    </source>
</evidence>
<evidence type="ECO:0000256" key="2">
    <source>
        <dbReference type="SAM" id="MobiDB-lite"/>
    </source>
</evidence>
<evidence type="ECO:0000305" key="3"/>
<evidence type="ECO:0000312" key="4">
    <source>
        <dbReference type="MGI" id="MGI:1917212"/>
    </source>
</evidence>
<organism>
    <name type="scientific">Mus musculus</name>
    <name type="common">Mouse</name>
    <dbReference type="NCBI Taxonomy" id="10090"/>
    <lineage>
        <taxon>Eukaryota</taxon>
        <taxon>Metazoa</taxon>
        <taxon>Chordata</taxon>
        <taxon>Craniata</taxon>
        <taxon>Vertebrata</taxon>
        <taxon>Euteleostomi</taxon>
        <taxon>Mammalia</taxon>
        <taxon>Eutheria</taxon>
        <taxon>Euarchontoglires</taxon>
        <taxon>Glires</taxon>
        <taxon>Rodentia</taxon>
        <taxon>Myomorpha</taxon>
        <taxon>Muroidea</taxon>
        <taxon>Muridae</taxon>
        <taxon>Murinae</taxon>
        <taxon>Mus</taxon>
        <taxon>Mus</taxon>
    </lineage>
</organism>
<feature type="chain" id="PRO_0000247200" description="Histidine protein methyltransferase 1 homolog">
    <location>
        <begin position="1"/>
        <end position="362"/>
    </location>
</feature>
<feature type="region of interest" description="Disordered" evidence="2">
    <location>
        <begin position="18"/>
        <end position="88"/>
    </location>
</feature>
<feature type="short sequence motif" description="Nuclear localization signal" evidence="1">
    <location>
        <begin position="237"/>
        <end position="243"/>
    </location>
</feature>
<feature type="compositionally biased region" description="Basic and acidic residues" evidence="2">
    <location>
        <begin position="30"/>
        <end position="51"/>
    </location>
</feature>
<feature type="compositionally biased region" description="Polar residues" evidence="2">
    <location>
        <begin position="52"/>
        <end position="65"/>
    </location>
</feature>
<feature type="compositionally biased region" description="Basic and acidic residues" evidence="2">
    <location>
        <begin position="73"/>
        <end position="82"/>
    </location>
</feature>
<feature type="binding site" evidence="1">
    <location>
        <begin position="158"/>
        <end position="162"/>
    </location>
    <ligand>
        <name>S-adenosyl-L-methionine</name>
        <dbReference type="ChEBI" id="CHEBI:59789"/>
    </ligand>
</feature>
<feature type="binding site" evidence="1">
    <location>
        <position position="185"/>
    </location>
    <ligand>
        <name>S-adenosyl-L-methionine</name>
        <dbReference type="ChEBI" id="CHEBI:59789"/>
    </ligand>
</feature>
<feature type="binding site" evidence="1">
    <location>
        <begin position="206"/>
        <end position="208"/>
    </location>
    <ligand>
        <name>S-adenosyl-L-methionine</name>
        <dbReference type="ChEBI" id="CHEBI:59789"/>
    </ligand>
</feature>
<feature type="binding site" evidence="1">
    <location>
        <begin position="259"/>
        <end position="261"/>
    </location>
    <ligand>
        <name>S-adenosyl-L-methionine</name>
        <dbReference type="ChEBI" id="CHEBI:59789"/>
    </ligand>
</feature>
<feature type="binding site" evidence="1">
    <location>
        <position position="283"/>
    </location>
    <ligand>
        <name>S-adenosyl-L-methionine</name>
        <dbReference type="ChEBI" id="CHEBI:59789"/>
    </ligand>
</feature>
<feature type="modified residue" description="Phosphoserine" evidence="1">
    <location>
        <position position="62"/>
    </location>
</feature>
<feature type="modified residue" description="Phosphoserine" evidence="1">
    <location>
        <position position="67"/>
    </location>
</feature>
<feature type="modified residue" description="Tele-methylhistidine" evidence="1">
    <location>
        <position position="144"/>
    </location>
</feature>
<feature type="sequence conflict" description="In Ref. 1; BAB28672." evidence="3" ref="1">
    <original>G</original>
    <variation>S</variation>
    <location>
        <position position="233"/>
    </location>
</feature>
<proteinExistence type="evidence at transcript level"/>
<dbReference type="EC" id="2.1.1.85" evidence="1"/>
<dbReference type="EMBL" id="AK013137">
    <property type="protein sequence ID" value="BAB28672.1"/>
    <property type="molecule type" value="mRNA"/>
</dbReference>
<dbReference type="EMBL" id="AK139786">
    <property type="protein sequence ID" value="BAE24137.1"/>
    <property type="molecule type" value="mRNA"/>
</dbReference>
<dbReference type="EMBL" id="BC050143">
    <property type="protein sequence ID" value="AAH50143.1"/>
    <property type="molecule type" value="mRNA"/>
</dbReference>
<dbReference type="EMBL" id="BC052693">
    <property type="protein sequence ID" value="AAH52693.1"/>
    <property type="molecule type" value="mRNA"/>
</dbReference>
<dbReference type="CCDS" id="CCDS15431.1"/>
<dbReference type="RefSeq" id="NP_001342061.1">
    <property type="nucleotide sequence ID" value="NM_001355132.1"/>
</dbReference>
<dbReference type="RefSeq" id="NP_081555.2">
    <property type="nucleotide sequence ID" value="NM_027279.2"/>
</dbReference>
<dbReference type="RefSeq" id="XP_006497046.1">
    <property type="nucleotide sequence ID" value="XM_006496983.2"/>
</dbReference>
<dbReference type="SMR" id="Q9CZ09"/>
<dbReference type="FunCoup" id="Q9CZ09">
    <property type="interactions" value="3438"/>
</dbReference>
<dbReference type="STRING" id="10090.ENSMUSP00000048636"/>
<dbReference type="iPTMnet" id="Q9CZ09"/>
<dbReference type="PhosphoSitePlus" id="Q9CZ09"/>
<dbReference type="PaxDb" id="10090-ENSMUSP00000048636"/>
<dbReference type="ProteomicsDB" id="292222"/>
<dbReference type="Pumba" id="Q9CZ09"/>
<dbReference type="Antibodypedia" id="34368">
    <property type="antibodies" value="43 antibodies from 11 providers"/>
</dbReference>
<dbReference type="DNASU" id="69962"/>
<dbReference type="Ensembl" id="ENSMUST00000045694.14">
    <property type="protein sequence ID" value="ENSMUSP00000048636.8"/>
    <property type="gene ID" value="ENSMUSG00000041396.14"/>
</dbReference>
<dbReference type="Ensembl" id="ENSMUST00000111490.2">
    <property type="protein sequence ID" value="ENSMUSP00000107116.2"/>
    <property type="gene ID" value="ENSMUSG00000041396.14"/>
</dbReference>
<dbReference type="GeneID" id="69962"/>
<dbReference type="KEGG" id="mmu:69962"/>
<dbReference type="UCSC" id="uc007dhv.2">
    <property type="organism name" value="mouse"/>
</dbReference>
<dbReference type="AGR" id="MGI:1917212"/>
<dbReference type="CTD" id="92342"/>
<dbReference type="MGI" id="MGI:1917212">
    <property type="gene designation" value="Mettl18"/>
</dbReference>
<dbReference type="VEuPathDB" id="HostDB:ENSMUSG00000041396"/>
<dbReference type="eggNOG" id="KOG2920">
    <property type="taxonomic scope" value="Eukaryota"/>
</dbReference>
<dbReference type="GeneTree" id="ENSGT00390000000464"/>
<dbReference type="HOGENOM" id="CLU_038704_0_1_1"/>
<dbReference type="InParanoid" id="Q9CZ09"/>
<dbReference type="OMA" id="LCKCRFF"/>
<dbReference type="OrthoDB" id="1723750at2759"/>
<dbReference type="PhylomeDB" id="Q9CZ09"/>
<dbReference type="TreeFam" id="TF320884"/>
<dbReference type="BioGRID-ORCS" id="69962">
    <property type="hits" value="4 hits in 77 CRISPR screens"/>
</dbReference>
<dbReference type="PRO" id="PR:Q9CZ09"/>
<dbReference type="Proteomes" id="UP000000589">
    <property type="component" value="Chromosome 1"/>
</dbReference>
<dbReference type="RNAct" id="Q9CZ09">
    <property type="molecule type" value="protein"/>
</dbReference>
<dbReference type="Bgee" id="ENSMUSG00000041396">
    <property type="expression patterns" value="Expressed in primary oocyte and 223 other cell types or tissues"/>
</dbReference>
<dbReference type="GO" id="GO:0005829">
    <property type="term" value="C:cytosol"/>
    <property type="evidence" value="ECO:0000250"/>
    <property type="project" value="UniProtKB"/>
</dbReference>
<dbReference type="GO" id="GO:0005730">
    <property type="term" value="C:nucleolus"/>
    <property type="evidence" value="ECO:0000250"/>
    <property type="project" value="UniProtKB"/>
</dbReference>
<dbReference type="GO" id="GO:0005634">
    <property type="term" value="C:nucleus"/>
    <property type="evidence" value="ECO:0000250"/>
    <property type="project" value="UniProtKB"/>
</dbReference>
<dbReference type="GO" id="GO:0032991">
    <property type="term" value="C:protein-containing complex"/>
    <property type="evidence" value="ECO:0007669"/>
    <property type="project" value="Ensembl"/>
</dbReference>
<dbReference type="GO" id="GO:0031072">
    <property type="term" value="F:heat shock protein binding"/>
    <property type="evidence" value="ECO:0007669"/>
    <property type="project" value="Ensembl"/>
</dbReference>
<dbReference type="GO" id="GO:0018064">
    <property type="term" value="F:protein-L-histidine N-tele-methyltransferase activity"/>
    <property type="evidence" value="ECO:0000250"/>
    <property type="project" value="UniProtKB"/>
</dbReference>
<dbReference type="GO" id="GO:0018026">
    <property type="term" value="P:peptidyl-lysine monomethylation"/>
    <property type="evidence" value="ECO:0000250"/>
    <property type="project" value="UniProtKB"/>
</dbReference>
<dbReference type="GO" id="GO:0090069">
    <property type="term" value="P:regulation of ribosome biogenesis"/>
    <property type="evidence" value="ECO:0000250"/>
    <property type="project" value="UniProtKB"/>
</dbReference>
<dbReference type="GO" id="GO:2000232">
    <property type="term" value="P:regulation of rRNA processing"/>
    <property type="evidence" value="ECO:0000250"/>
    <property type="project" value="UniProtKB"/>
</dbReference>
<dbReference type="GO" id="GO:0006417">
    <property type="term" value="P:regulation of translation"/>
    <property type="evidence" value="ECO:0000250"/>
    <property type="project" value="UniProtKB"/>
</dbReference>
<dbReference type="GO" id="GO:0006448">
    <property type="term" value="P:regulation of translational elongation"/>
    <property type="evidence" value="ECO:0000250"/>
    <property type="project" value="UniProtKB"/>
</dbReference>
<dbReference type="FunFam" id="3.40.50.150:FF:000268">
    <property type="entry name" value="Histidine protein methyltransferase 1 homolog"/>
    <property type="match status" value="1"/>
</dbReference>
<dbReference type="Gene3D" id="3.40.50.150">
    <property type="entry name" value="Vaccinia Virus protein VP39"/>
    <property type="match status" value="1"/>
</dbReference>
<dbReference type="InterPro" id="IPR019410">
    <property type="entry name" value="Methyltransf_16"/>
</dbReference>
<dbReference type="InterPro" id="IPR029063">
    <property type="entry name" value="SAM-dependent_MTases_sf"/>
</dbReference>
<dbReference type="PANTHER" id="PTHR14614">
    <property type="entry name" value="HEPATOCELLULAR CARCINOMA-ASSOCIATED ANTIGEN"/>
    <property type="match status" value="1"/>
</dbReference>
<dbReference type="PANTHER" id="PTHR14614:SF39">
    <property type="entry name" value="HISTIDINE PROTEIN METHYLTRANSFERASE 1 HOMOLOG"/>
    <property type="match status" value="1"/>
</dbReference>
<dbReference type="Pfam" id="PF06325">
    <property type="entry name" value="PrmA"/>
    <property type="match status" value="1"/>
</dbReference>
<dbReference type="SUPFAM" id="SSF53335">
    <property type="entry name" value="S-adenosyl-L-methionine-dependent methyltransferases"/>
    <property type="match status" value="1"/>
</dbReference>